<reference key="1">
    <citation type="submission" date="2000-05" db="EMBL/GenBank/DDBJ databases">
        <title>Molecular cloning of genes involved in blue pigment synthesis from Erwinia chrysanthemi RA3B.</title>
        <authorList>
            <person name="Huang H.-C."/>
            <person name="Chu M.-K."/>
            <person name="Hsu S.-T."/>
            <person name="Tzeng K.-C."/>
            <person name="Lin R.-H."/>
        </authorList>
    </citation>
    <scope>NUCLEOTIDE SEQUENCE [GENOMIC DNA]</scope>
    <source>
        <strain>RA3B</strain>
    </source>
</reference>
<feature type="chain" id="PRO_0000148699" description="Argininosuccinate synthase">
    <location>
        <begin position="1" status="less than"/>
        <end position="242"/>
    </location>
</feature>
<feature type="non-terminal residue">
    <location>
        <position position="1"/>
    </location>
</feature>
<evidence type="ECO:0000250" key="1"/>
<evidence type="ECO:0000305" key="2"/>
<name>ASSY_DICCH</name>
<accession>P0C1A0</accession>
<accession>P42181</accession>
<accession>Q9KHB9</accession>
<dbReference type="EC" id="6.3.4.5"/>
<dbReference type="EMBL" id="AF265211">
    <property type="protein sequence ID" value="AAF74776.1"/>
    <property type="molecule type" value="Genomic_DNA"/>
</dbReference>
<dbReference type="SMR" id="P0C1A0"/>
<dbReference type="UniPathway" id="UPA00068">
    <property type="reaction ID" value="UER00113"/>
</dbReference>
<dbReference type="GO" id="GO:0005737">
    <property type="term" value="C:cytoplasm"/>
    <property type="evidence" value="ECO:0007669"/>
    <property type="project" value="UniProtKB-SubCell"/>
</dbReference>
<dbReference type="GO" id="GO:0004055">
    <property type="term" value="F:argininosuccinate synthase activity"/>
    <property type="evidence" value="ECO:0007669"/>
    <property type="project" value="UniProtKB-EC"/>
</dbReference>
<dbReference type="GO" id="GO:0005524">
    <property type="term" value="F:ATP binding"/>
    <property type="evidence" value="ECO:0007669"/>
    <property type="project" value="UniProtKB-KW"/>
</dbReference>
<dbReference type="GO" id="GO:0042803">
    <property type="term" value="F:protein homodimerization activity"/>
    <property type="evidence" value="ECO:0007669"/>
    <property type="project" value="InterPro"/>
</dbReference>
<dbReference type="GO" id="GO:0000053">
    <property type="term" value="P:argininosuccinate metabolic process"/>
    <property type="evidence" value="ECO:0007669"/>
    <property type="project" value="TreeGrafter"/>
</dbReference>
<dbReference type="GO" id="GO:0006526">
    <property type="term" value="P:L-arginine biosynthetic process"/>
    <property type="evidence" value="ECO:0007669"/>
    <property type="project" value="UniProtKB-UniPathway"/>
</dbReference>
<dbReference type="GO" id="GO:0000050">
    <property type="term" value="P:urea cycle"/>
    <property type="evidence" value="ECO:0007669"/>
    <property type="project" value="TreeGrafter"/>
</dbReference>
<dbReference type="FunFam" id="1.10.287.400:FF:000001">
    <property type="entry name" value="Argininosuccinate synthase"/>
    <property type="match status" value="1"/>
</dbReference>
<dbReference type="Gene3D" id="1.10.287.400">
    <property type="match status" value="1"/>
</dbReference>
<dbReference type="Gene3D" id="3.90.1260.10">
    <property type="entry name" value="Argininosuccinate synthetase, chain A, domain 2"/>
    <property type="match status" value="1"/>
</dbReference>
<dbReference type="InterPro" id="IPR048268">
    <property type="entry name" value="Arginosuc_syn_C"/>
</dbReference>
<dbReference type="InterPro" id="IPR001518">
    <property type="entry name" value="Arginosuc_synth"/>
</dbReference>
<dbReference type="InterPro" id="IPR024074">
    <property type="entry name" value="AS_cat/multimer_dom_body"/>
</dbReference>
<dbReference type="InterPro" id="IPR024073">
    <property type="entry name" value="AS_multimer_C_tail"/>
</dbReference>
<dbReference type="PANTHER" id="PTHR11587">
    <property type="entry name" value="ARGININOSUCCINATE SYNTHASE"/>
    <property type="match status" value="1"/>
</dbReference>
<dbReference type="PANTHER" id="PTHR11587:SF2">
    <property type="entry name" value="ARGININOSUCCINATE SYNTHASE"/>
    <property type="match status" value="1"/>
</dbReference>
<dbReference type="Pfam" id="PF20979">
    <property type="entry name" value="Arginosuc_syn_C"/>
    <property type="match status" value="1"/>
</dbReference>
<dbReference type="SUPFAM" id="SSF69864">
    <property type="entry name" value="Argininosuccinate synthetase, C-terminal domain"/>
    <property type="match status" value="1"/>
</dbReference>
<keyword id="KW-0028">Amino-acid biosynthesis</keyword>
<keyword id="KW-0055">Arginine biosynthesis</keyword>
<keyword id="KW-0067">ATP-binding</keyword>
<keyword id="KW-0963">Cytoplasm</keyword>
<keyword id="KW-0436">Ligase</keyword>
<keyword id="KW-0547">Nucleotide-binding</keyword>
<protein>
    <recommendedName>
        <fullName>Argininosuccinate synthase</fullName>
        <ecNumber>6.3.4.5</ecNumber>
    </recommendedName>
    <alternativeName>
        <fullName>Citrulline--aspartate ligase</fullName>
    </alternativeName>
</protein>
<gene>
    <name type="primary">argG</name>
</gene>
<comment type="catalytic activity">
    <reaction>
        <text>L-citrulline + L-aspartate + ATP = 2-(N(omega)-L-arginino)succinate + AMP + diphosphate + H(+)</text>
        <dbReference type="Rhea" id="RHEA:10932"/>
        <dbReference type="ChEBI" id="CHEBI:15378"/>
        <dbReference type="ChEBI" id="CHEBI:29991"/>
        <dbReference type="ChEBI" id="CHEBI:30616"/>
        <dbReference type="ChEBI" id="CHEBI:33019"/>
        <dbReference type="ChEBI" id="CHEBI:57472"/>
        <dbReference type="ChEBI" id="CHEBI:57743"/>
        <dbReference type="ChEBI" id="CHEBI:456215"/>
        <dbReference type="EC" id="6.3.4.5"/>
    </reaction>
</comment>
<comment type="pathway">
    <text>Amino-acid biosynthesis; L-arginine biosynthesis; L-arginine from L-ornithine and carbamoyl phosphate: step 2/3.</text>
</comment>
<comment type="subunit">
    <text evidence="1">Homotetramer.</text>
</comment>
<comment type="subcellular location">
    <subcellularLocation>
        <location evidence="1">Cytoplasm</location>
    </subcellularLocation>
</comment>
<comment type="similarity">
    <text evidence="2">Belongs to the argininosuccinate synthase family. Type 2 subfamily.</text>
</comment>
<organism>
    <name type="scientific">Dickeya chrysanthemi</name>
    <name type="common">Pectobacterium chrysanthemi</name>
    <name type="synonym">Erwinia chrysanthemi</name>
    <dbReference type="NCBI Taxonomy" id="556"/>
    <lineage>
        <taxon>Bacteria</taxon>
        <taxon>Pseudomonadati</taxon>
        <taxon>Pseudomonadota</taxon>
        <taxon>Gammaproteobacteria</taxon>
        <taxon>Enterobacterales</taxon>
        <taxon>Pectobacteriaceae</taxon>
        <taxon>Dickeya</taxon>
    </lineage>
</organism>
<sequence>EFLNSSVKIVNPIMGVKFWDENVRIPAEEVTVRFERGHPVALNGQTFSDDVELLLEANRIGGRHGLGMSDQIENRIIEAKSRGIYEAPGMALLHIAYERLVTGIHNEDTIEQYHAHGRQLGRLLYQGRWFDPQALMLRDALQRWVASEITGEVTLELRRGNDYSILNTVSDNLTYKPERLTMEKGESVFSPDDRIGQLTMRNLDITDTREKLFNYVESGLISSGNAGLPQVANPLLQDKSAK</sequence>
<proteinExistence type="inferred from homology"/>